<proteinExistence type="inferred from homology"/>
<accession>Q46DW1</accession>
<sequence length="517" mass="56838">MQNTDTTKYIIHSKINADGVIERPDIVGAIFGQTEGLLGADLDLRDLQKTGRIGRIEVMVTAKGGKTKGNIFVPSSLDKVETSILAASLETIDRVGPCSAKIEVFQVEDVRAVKRKKIIERAKLIFTKMFDETVPESQELADEVRQSVRVDELTYYGKSRIPCGPNVLNSDAIIILEGRADILNLLRYGIKNTICVGGTNIPPEVAELTKKKTVTAFTDGDRGGELIIRELLQVADIDYVARAPDGKCVEDLVQKEVIRALRRKVPVEQIIEKYGIQEREGEESTRVERGSKRKIRAPEIAPRITEKKLHKRIKIHRVSSKPDLYEEELPEEETKGKASAKAFEKVSVKAAEKVSEMVPATAGKVKTRSIVAKPQISARKAPAAARVSREKPAEKVPSAVKVSRGEAVRVSPAPVKTVPVSPEATRFRPHVEALKGTLTARILDSQDKVIEEIAVRDLASRLKTYKENIQSVVFDGVITQRLVDIASSNAIKNLIGVKIGNIAKVPADMEVLTASML</sequence>
<comment type="function">
    <text evidence="1">RNA polymerase that catalyzes the synthesis of short RNA molecules used as primers for DNA polymerase during DNA replication. Also part of the exosome, which is a complex involved in RNA degradation. Acts as a poly(A)-binding protein that enhances the interaction between heteromeric, adenine-rich transcripts and the exosome.</text>
</comment>
<comment type="catalytic activity">
    <reaction evidence="1">
        <text>ssDNA + n NTP = ssDNA/pppN(pN)n-1 hybrid + (n-1) diphosphate.</text>
        <dbReference type="EC" id="2.7.7.101"/>
    </reaction>
</comment>
<comment type="cofactor">
    <cofactor evidence="1">
        <name>Mg(2+)</name>
        <dbReference type="ChEBI" id="CHEBI:18420"/>
    </cofactor>
    <text evidence="1">Binds two Mg(2+) per subunit.</text>
</comment>
<comment type="subunit">
    <text evidence="1">Forms a ternary complex with MCM helicase and DNA. Component of the archaeal exosome complex.</text>
</comment>
<comment type="similarity">
    <text evidence="1">Belongs to the archaeal DnaG primase family.</text>
</comment>
<protein>
    <recommendedName>
        <fullName evidence="1">DNA primase DnaG</fullName>
        <ecNumber evidence="1">2.7.7.101</ecNumber>
    </recommendedName>
</protein>
<name>DNAG_METBF</name>
<keyword id="KW-0235">DNA replication</keyword>
<keyword id="KW-0240">DNA-directed RNA polymerase</keyword>
<keyword id="KW-0271">Exosome</keyword>
<keyword id="KW-0460">Magnesium</keyword>
<keyword id="KW-0479">Metal-binding</keyword>
<keyword id="KW-0548">Nucleotidyltransferase</keyword>
<keyword id="KW-0639">Primosome</keyword>
<keyword id="KW-0804">Transcription</keyword>
<keyword id="KW-0808">Transferase</keyword>
<evidence type="ECO:0000255" key="1">
    <source>
        <dbReference type="HAMAP-Rule" id="MF_00007"/>
    </source>
</evidence>
<reference key="1">
    <citation type="journal article" date="2006" name="J. Bacteriol.">
        <title>The Methanosarcina barkeri genome: comparative analysis with Methanosarcina acetivorans and Methanosarcina mazei reveals extensive rearrangement within methanosarcinal genomes.</title>
        <authorList>
            <person name="Maeder D.L."/>
            <person name="Anderson I."/>
            <person name="Brettin T.S."/>
            <person name="Bruce D.C."/>
            <person name="Gilna P."/>
            <person name="Han C.S."/>
            <person name="Lapidus A."/>
            <person name="Metcalf W.W."/>
            <person name="Saunders E."/>
            <person name="Tapia R."/>
            <person name="Sowers K.R."/>
        </authorList>
    </citation>
    <scope>NUCLEOTIDE SEQUENCE [LARGE SCALE GENOMIC DNA]</scope>
    <source>
        <strain>Fusaro / DSM 804</strain>
    </source>
</reference>
<gene>
    <name evidence="1" type="primary">dnaG</name>
    <name type="ordered locus">Mbar_A0959</name>
</gene>
<organism>
    <name type="scientific">Methanosarcina barkeri (strain Fusaro / DSM 804)</name>
    <dbReference type="NCBI Taxonomy" id="269797"/>
    <lineage>
        <taxon>Archaea</taxon>
        <taxon>Methanobacteriati</taxon>
        <taxon>Methanobacteriota</taxon>
        <taxon>Stenosarchaea group</taxon>
        <taxon>Methanomicrobia</taxon>
        <taxon>Methanosarcinales</taxon>
        <taxon>Methanosarcinaceae</taxon>
        <taxon>Methanosarcina</taxon>
    </lineage>
</organism>
<feature type="chain" id="PRO_0000240459" description="DNA primase DnaG">
    <location>
        <begin position="1"/>
        <end position="517"/>
    </location>
</feature>
<feature type="domain" description="Toprim" evidence="1">
    <location>
        <begin position="171"/>
        <end position="257"/>
    </location>
</feature>
<feature type="binding site" evidence="1">
    <location>
        <position position="177"/>
    </location>
    <ligand>
        <name>Mg(2+)</name>
        <dbReference type="ChEBI" id="CHEBI:18420"/>
        <label>1</label>
        <note>catalytic</note>
    </ligand>
</feature>
<feature type="binding site" evidence="1">
    <location>
        <position position="219"/>
    </location>
    <ligand>
        <name>Mg(2+)</name>
        <dbReference type="ChEBI" id="CHEBI:18420"/>
        <label>1</label>
        <note>catalytic</note>
    </ligand>
</feature>
<feature type="binding site" evidence="1">
    <location>
        <position position="219"/>
    </location>
    <ligand>
        <name>Mg(2+)</name>
        <dbReference type="ChEBI" id="CHEBI:18420"/>
        <label>2</label>
    </ligand>
</feature>
<feature type="binding site" evidence="1">
    <location>
        <position position="221"/>
    </location>
    <ligand>
        <name>Mg(2+)</name>
        <dbReference type="ChEBI" id="CHEBI:18420"/>
        <label>2</label>
    </ligand>
</feature>
<dbReference type="EC" id="2.7.7.101" evidence="1"/>
<dbReference type="EMBL" id="CP000099">
    <property type="protein sequence ID" value="AAZ69931.1"/>
    <property type="molecule type" value="Genomic_DNA"/>
</dbReference>
<dbReference type="STRING" id="269797.Mbar_A0959"/>
<dbReference type="PaxDb" id="269797-Mbar_A0959"/>
<dbReference type="KEGG" id="mba:Mbar_A0959"/>
<dbReference type="eggNOG" id="arCOG04281">
    <property type="taxonomic scope" value="Archaea"/>
</dbReference>
<dbReference type="HOGENOM" id="CLU_034626_0_0_2"/>
<dbReference type="OrthoDB" id="8643at2157"/>
<dbReference type="GO" id="GO:0005737">
    <property type="term" value="C:cytoplasm"/>
    <property type="evidence" value="ECO:0007669"/>
    <property type="project" value="TreeGrafter"/>
</dbReference>
<dbReference type="GO" id="GO:0000428">
    <property type="term" value="C:DNA-directed RNA polymerase complex"/>
    <property type="evidence" value="ECO:0007669"/>
    <property type="project" value="UniProtKB-KW"/>
</dbReference>
<dbReference type="GO" id="GO:0000178">
    <property type="term" value="C:exosome (RNase complex)"/>
    <property type="evidence" value="ECO:0007669"/>
    <property type="project" value="UniProtKB-KW"/>
</dbReference>
<dbReference type="GO" id="GO:1990077">
    <property type="term" value="C:primosome complex"/>
    <property type="evidence" value="ECO:0007669"/>
    <property type="project" value="UniProtKB-KW"/>
</dbReference>
<dbReference type="GO" id="GO:0003899">
    <property type="term" value="F:DNA-directed RNA polymerase activity"/>
    <property type="evidence" value="ECO:0007669"/>
    <property type="project" value="InterPro"/>
</dbReference>
<dbReference type="GO" id="GO:0046872">
    <property type="term" value="F:metal ion binding"/>
    <property type="evidence" value="ECO:0007669"/>
    <property type="project" value="UniProtKB-KW"/>
</dbReference>
<dbReference type="GO" id="GO:0008143">
    <property type="term" value="F:poly(A) binding"/>
    <property type="evidence" value="ECO:0007669"/>
    <property type="project" value="InterPro"/>
</dbReference>
<dbReference type="GO" id="GO:0006269">
    <property type="term" value="P:DNA replication, synthesis of primer"/>
    <property type="evidence" value="ECO:0007669"/>
    <property type="project" value="UniProtKB-UniRule"/>
</dbReference>
<dbReference type="CDD" id="cd01029">
    <property type="entry name" value="TOPRIM_primases"/>
    <property type="match status" value="1"/>
</dbReference>
<dbReference type="FunFam" id="3.40.1360.10:FF:000010">
    <property type="entry name" value="DNA primase DnaG"/>
    <property type="match status" value="1"/>
</dbReference>
<dbReference type="Gene3D" id="3.40.1360.10">
    <property type="match status" value="1"/>
</dbReference>
<dbReference type="HAMAP" id="MF_00007">
    <property type="entry name" value="DNA_primase_DnaG_arc"/>
    <property type="match status" value="1"/>
</dbReference>
<dbReference type="InterPro" id="IPR050219">
    <property type="entry name" value="DnaG_primase"/>
</dbReference>
<dbReference type="InterPro" id="IPR020607">
    <property type="entry name" value="Primase_DnaG_arc"/>
</dbReference>
<dbReference type="InterPro" id="IPR034154">
    <property type="entry name" value="TOPRIM_DnaG/twinkle"/>
</dbReference>
<dbReference type="InterPro" id="IPR006171">
    <property type="entry name" value="TOPRIM_dom"/>
</dbReference>
<dbReference type="NCBIfam" id="NF003108">
    <property type="entry name" value="PRK04031.1-1"/>
    <property type="match status" value="1"/>
</dbReference>
<dbReference type="PANTHER" id="PTHR30313">
    <property type="entry name" value="DNA PRIMASE"/>
    <property type="match status" value="1"/>
</dbReference>
<dbReference type="PANTHER" id="PTHR30313:SF2">
    <property type="entry name" value="DNA PRIMASE"/>
    <property type="match status" value="1"/>
</dbReference>
<dbReference type="Pfam" id="PF13662">
    <property type="entry name" value="Toprim_4"/>
    <property type="match status" value="1"/>
</dbReference>
<dbReference type="SMART" id="SM00493">
    <property type="entry name" value="TOPRIM"/>
    <property type="match status" value="1"/>
</dbReference>
<dbReference type="SUPFAM" id="SSF56731">
    <property type="entry name" value="DNA primase core"/>
    <property type="match status" value="1"/>
</dbReference>
<dbReference type="PROSITE" id="PS50880">
    <property type="entry name" value="TOPRIM"/>
    <property type="match status" value="1"/>
</dbReference>